<protein>
    <recommendedName>
        <fullName evidence="1">Phosphoenolpyruvate carboxylase</fullName>
        <shortName evidence="1">PEPC</shortName>
        <shortName evidence="1">PEPCase</shortName>
        <ecNumber evidence="1">4.1.1.31</ecNumber>
    </recommendedName>
</protein>
<feature type="chain" id="PRO_1000146982" description="Phosphoenolpyruvate carboxylase">
    <location>
        <begin position="1"/>
        <end position="876"/>
    </location>
</feature>
<feature type="active site" evidence="1">
    <location>
        <position position="138"/>
    </location>
</feature>
<feature type="active site" evidence="1">
    <location>
        <position position="543"/>
    </location>
</feature>
<reference key="1">
    <citation type="submission" date="2009-02" db="EMBL/GenBank/DDBJ databases">
        <title>Vibrio splendidus str. LGP32 complete genome.</title>
        <authorList>
            <person name="Mazel D."/>
            <person name="Le Roux F."/>
        </authorList>
    </citation>
    <scope>NUCLEOTIDE SEQUENCE [LARGE SCALE GENOMIC DNA]</scope>
    <source>
        <strain>LGP32</strain>
    </source>
</reference>
<keyword id="KW-0120">Carbon dioxide fixation</keyword>
<keyword id="KW-0456">Lyase</keyword>
<keyword id="KW-0460">Magnesium</keyword>
<name>CAPP_VIBA3</name>
<organism>
    <name type="scientific">Vibrio atlanticus (strain LGP32)</name>
    <name type="common">Vibrio splendidus (strain Mel32)</name>
    <dbReference type="NCBI Taxonomy" id="575788"/>
    <lineage>
        <taxon>Bacteria</taxon>
        <taxon>Pseudomonadati</taxon>
        <taxon>Pseudomonadota</taxon>
        <taxon>Gammaproteobacteria</taxon>
        <taxon>Vibrionales</taxon>
        <taxon>Vibrionaceae</taxon>
        <taxon>Vibrio</taxon>
    </lineage>
</organism>
<dbReference type="EC" id="4.1.1.31" evidence="1"/>
<dbReference type="EMBL" id="FM954972">
    <property type="protein sequence ID" value="CAV20187.1"/>
    <property type="molecule type" value="Genomic_DNA"/>
</dbReference>
<dbReference type="SMR" id="B7VLL5"/>
<dbReference type="STRING" id="575788.VS_2890"/>
<dbReference type="KEGG" id="vsp:VS_2890"/>
<dbReference type="PATRIC" id="fig|575788.5.peg.4100"/>
<dbReference type="eggNOG" id="COG2352">
    <property type="taxonomic scope" value="Bacteria"/>
</dbReference>
<dbReference type="HOGENOM" id="CLU_006557_2_0_6"/>
<dbReference type="Proteomes" id="UP000009100">
    <property type="component" value="Chromosome 1"/>
</dbReference>
<dbReference type="GO" id="GO:0005829">
    <property type="term" value="C:cytosol"/>
    <property type="evidence" value="ECO:0007669"/>
    <property type="project" value="TreeGrafter"/>
</dbReference>
<dbReference type="GO" id="GO:0000287">
    <property type="term" value="F:magnesium ion binding"/>
    <property type="evidence" value="ECO:0007669"/>
    <property type="project" value="UniProtKB-UniRule"/>
</dbReference>
<dbReference type="GO" id="GO:0008964">
    <property type="term" value="F:phosphoenolpyruvate carboxylase activity"/>
    <property type="evidence" value="ECO:0007669"/>
    <property type="project" value="UniProtKB-UniRule"/>
</dbReference>
<dbReference type="GO" id="GO:0015977">
    <property type="term" value="P:carbon fixation"/>
    <property type="evidence" value="ECO:0007669"/>
    <property type="project" value="UniProtKB-UniRule"/>
</dbReference>
<dbReference type="GO" id="GO:0006107">
    <property type="term" value="P:oxaloacetate metabolic process"/>
    <property type="evidence" value="ECO:0007669"/>
    <property type="project" value="UniProtKB-UniRule"/>
</dbReference>
<dbReference type="GO" id="GO:0006099">
    <property type="term" value="P:tricarboxylic acid cycle"/>
    <property type="evidence" value="ECO:0007669"/>
    <property type="project" value="InterPro"/>
</dbReference>
<dbReference type="Gene3D" id="1.20.1440.90">
    <property type="entry name" value="Phosphoenolpyruvate/pyruvate domain"/>
    <property type="match status" value="1"/>
</dbReference>
<dbReference type="HAMAP" id="MF_00595">
    <property type="entry name" value="PEPcase_type1"/>
    <property type="match status" value="1"/>
</dbReference>
<dbReference type="InterPro" id="IPR021135">
    <property type="entry name" value="PEP_COase"/>
</dbReference>
<dbReference type="InterPro" id="IPR022805">
    <property type="entry name" value="PEP_COase_bac/pln-type"/>
</dbReference>
<dbReference type="InterPro" id="IPR018129">
    <property type="entry name" value="PEP_COase_Lys_AS"/>
</dbReference>
<dbReference type="InterPro" id="IPR033129">
    <property type="entry name" value="PEPCASE_His_AS"/>
</dbReference>
<dbReference type="InterPro" id="IPR015813">
    <property type="entry name" value="Pyrv/PenolPyrv_kinase-like_dom"/>
</dbReference>
<dbReference type="NCBIfam" id="NF000584">
    <property type="entry name" value="PRK00009.1"/>
    <property type="match status" value="1"/>
</dbReference>
<dbReference type="PANTHER" id="PTHR30523">
    <property type="entry name" value="PHOSPHOENOLPYRUVATE CARBOXYLASE"/>
    <property type="match status" value="1"/>
</dbReference>
<dbReference type="PANTHER" id="PTHR30523:SF6">
    <property type="entry name" value="PHOSPHOENOLPYRUVATE CARBOXYLASE"/>
    <property type="match status" value="1"/>
</dbReference>
<dbReference type="Pfam" id="PF00311">
    <property type="entry name" value="PEPcase"/>
    <property type="match status" value="1"/>
</dbReference>
<dbReference type="PRINTS" id="PR00150">
    <property type="entry name" value="PEPCARBXLASE"/>
</dbReference>
<dbReference type="SUPFAM" id="SSF51621">
    <property type="entry name" value="Phosphoenolpyruvate/pyruvate domain"/>
    <property type="match status" value="1"/>
</dbReference>
<dbReference type="PROSITE" id="PS00781">
    <property type="entry name" value="PEPCASE_1"/>
    <property type="match status" value="1"/>
</dbReference>
<dbReference type="PROSITE" id="PS00393">
    <property type="entry name" value="PEPCASE_2"/>
    <property type="match status" value="1"/>
</dbReference>
<sequence length="876" mass="98877">MNEKYAALKSNVSMLGRLLGNTIQDAHGDVILEKVETIRKLSKSARAGNKADRDSLVEEIKNLPNEQLTPVARAFNQFLNLTNMAEQYHTISRHCEEHVCEPDVLQSLFSKLNQNDISKLDAAQAVRDLNIELVLTAHPTEITRRTMINKLVKINECLSKLELSDLSHKERAKTERRLEQLIAQGWHSDVIRQQRPTPLDEAKWGFAVVENSLWEAVPDFLREMDGRLKGYLGEGLPIDARPVHFSSWMGGDRDGNPFVTHTITKEVLRLSRWKAADLYLGDVNELITELSMTKCNDAVRELAGDEHEAYRAILKSLRTLLNNTLEVLDAKLHDAEVPKKETLQNIDQLWTPLYACYQSLHECGMGVIADGSLLDTLRRLKAFGVHLVRLDVRQESTRHSDVLSELTRYLGIGDYDQWSEQDKVAFLTNELSSKRPLLPRDWEPSEQVKEVLDTCKVVAAQPREAFGAYVISMARTASDVLAVHLLLQECGCPYRMDVCPLFETLDDLNNSEAVMKQLMSIDLYRGFIQNHQMVMIGYSDSAKDAGVMSAGWAQYDAMDKLVKACEEEGIELTLFHGRGGTVGRGGAPAHAALLSQPPKSLKGGLRVTEQGEMIRFKLGLPDVAVNSFNLYASAILEANLLPPPEPKQEWRDLMEVLSEVSCEAYRNVVRGEEKFVPYFRQATPELELGKLPLGSRPAKRNPNGGVESLRAIPWIFSWSQNRLVLPAWLGAGEAIQYSVDQGHQALLEEMCREWPFFSTRLGMLEMVYSKCNMEIAKYYDQRLVDEELLPLGELLREQLQKDIKAVLNVENNENLMQSDPWGLESIRLRNIYVEPLNMLQAELLYRTRKCETPPAELEEALMVTIAGIAAGMRNTG</sequence>
<accession>B7VLL5</accession>
<proteinExistence type="inferred from homology"/>
<gene>
    <name evidence="1" type="primary">ppc</name>
    <name type="ordered locus">VS_2890</name>
</gene>
<evidence type="ECO:0000255" key="1">
    <source>
        <dbReference type="HAMAP-Rule" id="MF_00595"/>
    </source>
</evidence>
<comment type="function">
    <text evidence="1">Forms oxaloacetate, a four-carbon dicarboxylic acid source for the tricarboxylic acid cycle.</text>
</comment>
<comment type="catalytic activity">
    <reaction evidence="1">
        <text>oxaloacetate + phosphate = phosphoenolpyruvate + hydrogencarbonate</text>
        <dbReference type="Rhea" id="RHEA:28370"/>
        <dbReference type="ChEBI" id="CHEBI:16452"/>
        <dbReference type="ChEBI" id="CHEBI:17544"/>
        <dbReference type="ChEBI" id="CHEBI:43474"/>
        <dbReference type="ChEBI" id="CHEBI:58702"/>
        <dbReference type="EC" id="4.1.1.31"/>
    </reaction>
</comment>
<comment type="cofactor">
    <cofactor evidence="1">
        <name>Mg(2+)</name>
        <dbReference type="ChEBI" id="CHEBI:18420"/>
    </cofactor>
</comment>
<comment type="similarity">
    <text evidence="1">Belongs to the PEPCase type 1 family.</text>
</comment>